<feature type="chain" id="PRO_0000062087" description="Large ribosomal subunit protein uL16">
    <location>
        <begin position="1"/>
        <end position="138"/>
    </location>
</feature>
<feature type="region of interest" description="Disordered" evidence="2">
    <location>
        <begin position="1"/>
        <end position="23"/>
    </location>
</feature>
<feature type="compositionally biased region" description="Basic residues" evidence="2">
    <location>
        <begin position="1"/>
        <end position="16"/>
    </location>
</feature>
<organism>
    <name type="scientific">Corynebacterium glutamicum (strain ATCC 13032 / DSM 20300 / JCM 1318 / BCRC 11384 / CCUG 27702 / LMG 3730 / NBRC 12168 / NCIMB 10025 / NRRL B-2784 / 534)</name>
    <dbReference type="NCBI Taxonomy" id="196627"/>
    <lineage>
        <taxon>Bacteria</taxon>
        <taxon>Bacillati</taxon>
        <taxon>Actinomycetota</taxon>
        <taxon>Actinomycetes</taxon>
        <taxon>Mycobacteriales</taxon>
        <taxon>Corynebacteriaceae</taxon>
        <taxon>Corynebacterium</taxon>
    </lineage>
</organism>
<comment type="function">
    <text evidence="1">Binds 23S rRNA and is also seen to make contacts with the A and possibly P site tRNAs.</text>
</comment>
<comment type="subunit">
    <text evidence="1">Part of the 50S ribosomal subunit.</text>
</comment>
<comment type="similarity">
    <text evidence="1">Belongs to the universal ribosomal protein uL16 family.</text>
</comment>
<sequence length="138" mass="15728">MLIPKRVKYRRQHRPTRSGISKGGNRVTFGEYGIQALEPAYITNRQIESARIAINRHVKRGGKVWINIFPDRPLTQKPLGVRMGSGKGPVEKWVANIKPGRILFEMSYPDEATALEALRRAGQKLPCKVRIVKREDQL</sequence>
<accession>Q8NT00</accession>
<accession>Q6M7N0</accession>
<gene>
    <name evidence="1" type="primary">rplP</name>
    <name type="ordered locus">Cgl0515</name>
    <name type="ordered locus">cg0602</name>
</gene>
<proteinExistence type="inferred from homology"/>
<name>RL16_CORGL</name>
<keyword id="KW-1185">Reference proteome</keyword>
<keyword id="KW-0687">Ribonucleoprotein</keyword>
<keyword id="KW-0689">Ribosomal protein</keyword>
<keyword id="KW-0694">RNA-binding</keyword>
<keyword id="KW-0699">rRNA-binding</keyword>
<keyword id="KW-0820">tRNA-binding</keyword>
<evidence type="ECO:0000255" key="1">
    <source>
        <dbReference type="HAMAP-Rule" id="MF_01342"/>
    </source>
</evidence>
<evidence type="ECO:0000256" key="2">
    <source>
        <dbReference type="SAM" id="MobiDB-lite"/>
    </source>
</evidence>
<evidence type="ECO:0000305" key="3"/>
<reference key="1">
    <citation type="journal article" date="2003" name="Appl. Microbiol. Biotechnol.">
        <title>The Corynebacterium glutamicum genome: features and impacts on biotechnological processes.</title>
        <authorList>
            <person name="Ikeda M."/>
            <person name="Nakagawa S."/>
        </authorList>
    </citation>
    <scope>NUCLEOTIDE SEQUENCE [LARGE SCALE GENOMIC DNA]</scope>
    <source>
        <strain>ATCC 13032 / DSM 20300 / JCM 1318 / BCRC 11384 / CCUG 27702 / LMG 3730 / NBRC 12168 / NCIMB 10025 / NRRL B-2784 / 534</strain>
    </source>
</reference>
<reference key="2">
    <citation type="journal article" date="2003" name="J. Biotechnol.">
        <title>The complete Corynebacterium glutamicum ATCC 13032 genome sequence and its impact on the production of L-aspartate-derived amino acids and vitamins.</title>
        <authorList>
            <person name="Kalinowski J."/>
            <person name="Bathe B."/>
            <person name="Bartels D."/>
            <person name="Bischoff N."/>
            <person name="Bott M."/>
            <person name="Burkovski A."/>
            <person name="Dusch N."/>
            <person name="Eggeling L."/>
            <person name="Eikmanns B.J."/>
            <person name="Gaigalat L."/>
            <person name="Goesmann A."/>
            <person name="Hartmann M."/>
            <person name="Huthmacher K."/>
            <person name="Kraemer R."/>
            <person name="Linke B."/>
            <person name="McHardy A.C."/>
            <person name="Meyer F."/>
            <person name="Moeckel B."/>
            <person name="Pfefferle W."/>
            <person name="Puehler A."/>
            <person name="Rey D.A."/>
            <person name="Rueckert C."/>
            <person name="Rupp O."/>
            <person name="Sahm H."/>
            <person name="Wendisch V.F."/>
            <person name="Wiegraebe I."/>
            <person name="Tauch A."/>
        </authorList>
    </citation>
    <scope>NUCLEOTIDE SEQUENCE [LARGE SCALE GENOMIC DNA]</scope>
    <source>
        <strain>ATCC 13032 / DSM 20300 / JCM 1318 / BCRC 11384 / CCUG 27702 / LMG 3730 / NBRC 12168 / NCIMB 10025 / NRRL B-2784 / 534</strain>
    </source>
</reference>
<dbReference type="EMBL" id="BA000036">
    <property type="protein sequence ID" value="BAB97908.1"/>
    <property type="molecule type" value="Genomic_DNA"/>
</dbReference>
<dbReference type="EMBL" id="BX927149">
    <property type="protein sequence ID" value="CAF19224.1"/>
    <property type="molecule type" value="Genomic_DNA"/>
</dbReference>
<dbReference type="RefSeq" id="NP_599755.1">
    <property type="nucleotide sequence ID" value="NC_003450.3"/>
</dbReference>
<dbReference type="RefSeq" id="WP_003854302.1">
    <property type="nucleotide sequence ID" value="NC_006958.1"/>
</dbReference>
<dbReference type="SMR" id="Q8NT00"/>
<dbReference type="STRING" id="196627.cg0602"/>
<dbReference type="GeneID" id="1021516"/>
<dbReference type="KEGG" id="cgb:cg0602"/>
<dbReference type="KEGG" id="cgl:Cgl0515"/>
<dbReference type="PATRIC" id="fig|196627.13.peg.510"/>
<dbReference type="eggNOG" id="COG0197">
    <property type="taxonomic scope" value="Bacteria"/>
</dbReference>
<dbReference type="HOGENOM" id="CLU_078858_2_1_11"/>
<dbReference type="OrthoDB" id="9802589at2"/>
<dbReference type="BioCyc" id="CORYNE:G18NG-10077-MONOMER"/>
<dbReference type="Proteomes" id="UP000000582">
    <property type="component" value="Chromosome"/>
</dbReference>
<dbReference type="Proteomes" id="UP000001009">
    <property type="component" value="Chromosome"/>
</dbReference>
<dbReference type="GO" id="GO:0022625">
    <property type="term" value="C:cytosolic large ribosomal subunit"/>
    <property type="evidence" value="ECO:0007669"/>
    <property type="project" value="TreeGrafter"/>
</dbReference>
<dbReference type="GO" id="GO:0019843">
    <property type="term" value="F:rRNA binding"/>
    <property type="evidence" value="ECO:0007669"/>
    <property type="project" value="UniProtKB-UniRule"/>
</dbReference>
<dbReference type="GO" id="GO:0003735">
    <property type="term" value="F:structural constituent of ribosome"/>
    <property type="evidence" value="ECO:0007669"/>
    <property type="project" value="InterPro"/>
</dbReference>
<dbReference type="GO" id="GO:0000049">
    <property type="term" value="F:tRNA binding"/>
    <property type="evidence" value="ECO:0007669"/>
    <property type="project" value="UniProtKB-KW"/>
</dbReference>
<dbReference type="GO" id="GO:0006412">
    <property type="term" value="P:translation"/>
    <property type="evidence" value="ECO:0007669"/>
    <property type="project" value="UniProtKB-UniRule"/>
</dbReference>
<dbReference type="CDD" id="cd01433">
    <property type="entry name" value="Ribosomal_L16_L10e"/>
    <property type="match status" value="1"/>
</dbReference>
<dbReference type="FunFam" id="3.90.1170.10:FF:000001">
    <property type="entry name" value="50S ribosomal protein L16"/>
    <property type="match status" value="1"/>
</dbReference>
<dbReference type="Gene3D" id="3.90.1170.10">
    <property type="entry name" value="Ribosomal protein L10e/L16"/>
    <property type="match status" value="1"/>
</dbReference>
<dbReference type="HAMAP" id="MF_01342">
    <property type="entry name" value="Ribosomal_uL16"/>
    <property type="match status" value="1"/>
</dbReference>
<dbReference type="InterPro" id="IPR047873">
    <property type="entry name" value="Ribosomal_uL16"/>
</dbReference>
<dbReference type="InterPro" id="IPR000114">
    <property type="entry name" value="Ribosomal_uL16_bact-type"/>
</dbReference>
<dbReference type="InterPro" id="IPR020798">
    <property type="entry name" value="Ribosomal_uL16_CS"/>
</dbReference>
<dbReference type="InterPro" id="IPR016180">
    <property type="entry name" value="Ribosomal_uL16_dom"/>
</dbReference>
<dbReference type="InterPro" id="IPR036920">
    <property type="entry name" value="Ribosomal_uL16_sf"/>
</dbReference>
<dbReference type="NCBIfam" id="TIGR01164">
    <property type="entry name" value="rplP_bact"/>
    <property type="match status" value="1"/>
</dbReference>
<dbReference type="PANTHER" id="PTHR12220">
    <property type="entry name" value="50S/60S RIBOSOMAL PROTEIN L16"/>
    <property type="match status" value="1"/>
</dbReference>
<dbReference type="PANTHER" id="PTHR12220:SF13">
    <property type="entry name" value="LARGE RIBOSOMAL SUBUNIT PROTEIN UL16M"/>
    <property type="match status" value="1"/>
</dbReference>
<dbReference type="Pfam" id="PF00252">
    <property type="entry name" value="Ribosomal_L16"/>
    <property type="match status" value="1"/>
</dbReference>
<dbReference type="PRINTS" id="PR00060">
    <property type="entry name" value="RIBOSOMALL16"/>
</dbReference>
<dbReference type="SUPFAM" id="SSF54686">
    <property type="entry name" value="Ribosomal protein L16p/L10e"/>
    <property type="match status" value="1"/>
</dbReference>
<dbReference type="PROSITE" id="PS00586">
    <property type="entry name" value="RIBOSOMAL_L16_1"/>
    <property type="match status" value="1"/>
</dbReference>
<dbReference type="PROSITE" id="PS00701">
    <property type="entry name" value="RIBOSOMAL_L16_2"/>
    <property type="match status" value="1"/>
</dbReference>
<protein>
    <recommendedName>
        <fullName evidence="1">Large ribosomal subunit protein uL16</fullName>
    </recommendedName>
    <alternativeName>
        <fullName evidence="3">50S ribosomal protein L16</fullName>
    </alternativeName>
</protein>